<comment type="function">
    <text evidence="1">Beta-glucosidases are one of a number of cellulolytic enzymes involved in the degradation of cellulosic biomass. Catalyzes the last step releasing glucose from the inhibitory cellobiose (By similarity).</text>
</comment>
<comment type="catalytic activity">
    <reaction>
        <text>Hydrolysis of terminal, non-reducing beta-D-glucosyl residues with release of beta-D-glucose.</text>
        <dbReference type="EC" id="3.2.1.21"/>
    </reaction>
</comment>
<comment type="pathway">
    <text>Glycan metabolism; cellulose degradation.</text>
</comment>
<comment type="subcellular location">
    <subcellularLocation>
        <location evidence="1">Secreted</location>
    </subcellularLocation>
</comment>
<comment type="similarity">
    <text evidence="4">Belongs to the glycosyl hydrolase 3 family.</text>
</comment>
<organism>
    <name type="scientific">Aspergillus oryzae (strain ATCC 42149 / RIB 40)</name>
    <name type="common">Yellow koji mold</name>
    <dbReference type="NCBI Taxonomy" id="510516"/>
    <lineage>
        <taxon>Eukaryota</taxon>
        <taxon>Fungi</taxon>
        <taxon>Dikarya</taxon>
        <taxon>Ascomycota</taxon>
        <taxon>Pezizomycotina</taxon>
        <taxon>Eurotiomycetes</taxon>
        <taxon>Eurotiomycetidae</taxon>
        <taxon>Eurotiales</taxon>
        <taxon>Aspergillaceae</taxon>
        <taxon>Aspergillus</taxon>
        <taxon>Aspergillus subgen. Circumdati</taxon>
    </lineage>
</organism>
<accession>Q2UUD6</accession>
<dbReference type="EC" id="3.2.1.21"/>
<dbReference type="EMBL" id="BA000049">
    <property type="protein sequence ID" value="BAE54829.1"/>
    <property type="molecule type" value="Genomic_DNA"/>
</dbReference>
<dbReference type="RefSeq" id="XP_001816831.1">
    <property type="nucleotide sequence ID" value="XM_001816779.2"/>
</dbReference>
<dbReference type="PDB" id="5FJJ">
    <property type="method" value="X-ray"/>
    <property type="resolution" value="1.95 A"/>
    <property type="chains" value="A/B/C/D=20-861"/>
</dbReference>
<dbReference type="PDBsum" id="5FJJ"/>
<dbReference type="SMR" id="Q2UUD6"/>
<dbReference type="STRING" id="510516.Q2UUD6"/>
<dbReference type="CAZy" id="GH3">
    <property type="family name" value="Glycoside Hydrolase Family 3"/>
</dbReference>
<dbReference type="GlyCosmos" id="Q2UUD6">
    <property type="glycosylation" value="13 sites, No reported glycans"/>
</dbReference>
<dbReference type="EnsemblFungi" id="BAE54829">
    <property type="protein sequence ID" value="BAE54829"/>
    <property type="gene ID" value="AO090009000356"/>
</dbReference>
<dbReference type="GeneID" id="5988761"/>
<dbReference type="KEGG" id="aor:AO090009000356"/>
<dbReference type="VEuPathDB" id="FungiDB:AO090009000356"/>
<dbReference type="HOGENOM" id="CLU_004542_2_0_1"/>
<dbReference type="OMA" id="YYPSPWA"/>
<dbReference type="OrthoDB" id="25956at5052"/>
<dbReference type="BRENDA" id="3.2.1.21">
    <property type="organism ID" value="522"/>
</dbReference>
<dbReference type="UniPathway" id="UPA00696"/>
<dbReference type="Proteomes" id="UP000006564">
    <property type="component" value="Chromosome 1"/>
</dbReference>
<dbReference type="GO" id="GO:0005576">
    <property type="term" value="C:extracellular region"/>
    <property type="evidence" value="ECO:0007669"/>
    <property type="project" value="UniProtKB-SubCell"/>
</dbReference>
<dbReference type="GO" id="GO:0008422">
    <property type="term" value="F:beta-glucosidase activity"/>
    <property type="evidence" value="ECO:0007669"/>
    <property type="project" value="UniProtKB-EC"/>
</dbReference>
<dbReference type="GO" id="GO:0016052">
    <property type="term" value="P:carbohydrate catabolic process"/>
    <property type="evidence" value="ECO:0000314"/>
    <property type="project" value="AspGD"/>
</dbReference>
<dbReference type="GO" id="GO:0030245">
    <property type="term" value="P:cellulose catabolic process"/>
    <property type="evidence" value="ECO:0007669"/>
    <property type="project" value="UniProtKB-UniPathway"/>
</dbReference>
<dbReference type="FunFam" id="2.60.40.10:FF:001391">
    <property type="entry name" value="Beta-glucosidase"/>
    <property type="match status" value="1"/>
</dbReference>
<dbReference type="FunFam" id="3.20.20.300:FF:000002">
    <property type="entry name" value="Probable beta-glucosidase"/>
    <property type="match status" value="1"/>
</dbReference>
<dbReference type="FunFam" id="3.40.50.1700:FF:000003">
    <property type="entry name" value="Probable beta-glucosidase"/>
    <property type="match status" value="1"/>
</dbReference>
<dbReference type="Gene3D" id="3.40.50.1700">
    <property type="entry name" value="Glycoside hydrolase family 3 C-terminal domain"/>
    <property type="match status" value="1"/>
</dbReference>
<dbReference type="Gene3D" id="3.20.20.300">
    <property type="entry name" value="Glycoside hydrolase, family 3, N-terminal domain"/>
    <property type="match status" value="1"/>
</dbReference>
<dbReference type="Gene3D" id="2.60.40.10">
    <property type="entry name" value="Immunoglobulins"/>
    <property type="match status" value="1"/>
</dbReference>
<dbReference type="InterPro" id="IPR050288">
    <property type="entry name" value="Cellulose_deg_GH3"/>
</dbReference>
<dbReference type="InterPro" id="IPR026891">
    <property type="entry name" value="Fn3-like"/>
</dbReference>
<dbReference type="InterPro" id="IPR019800">
    <property type="entry name" value="Glyco_hydro_3_AS"/>
</dbReference>
<dbReference type="InterPro" id="IPR002772">
    <property type="entry name" value="Glyco_hydro_3_C"/>
</dbReference>
<dbReference type="InterPro" id="IPR036881">
    <property type="entry name" value="Glyco_hydro_3_C_sf"/>
</dbReference>
<dbReference type="InterPro" id="IPR001764">
    <property type="entry name" value="Glyco_hydro_3_N"/>
</dbReference>
<dbReference type="InterPro" id="IPR036962">
    <property type="entry name" value="Glyco_hydro_3_N_sf"/>
</dbReference>
<dbReference type="InterPro" id="IPR017853">
    <property type="entry name" value="Glycoside_hydrolase_SF"/>
</dbReference>
<dbReference type="InterPro" id="IPR013783">
    <property type="entry name" value="Ig-like_fold"/>
</dbReference>
<dbReference type="PANTHER" id="PTHR42715">
    <property type="entry name" value="BETA-GLUCOSIDASE"/>
    <property type="match status" value="1"/>
</dbReference>
<dbReference type="PANTHER" id="PTHR42715:SF29">
    <property type="entry name" value="BETA-GLUCOSIDASE A-RELATED"/>
    <property type="match status" value="1"/>
</dbReference>
<dbReference type="Pfam" id="PF14310">
    <property type="entry name" value="Fn3-like"/>
    <property type="match status" value="1"/>
</dbReference>
<dbReference type="Pfam" id="PF00933">
    <property type="entry name" value="Glyco_hydro_3"/>
    <property type="match status" value="1"/>
</dbReference>
<dbReference type="Pfam" id="PF01915">
    <property type="entry name" value="Glyco_hydro_3_C"/>
    <property type="match status" value="1"/>
</dbReference>
<dbReference type="PRINTS" id="PR00133">
    <property type="entry name" value="GLHYDRLASE3"/>
</dbReference>
<dbReference type="SMART" id="SM01217">
    <property type="entry name" value="Fn3_like"/>
    <property type="match status" value="1"/>
</dbReference>
<dbReference type="SUPFAM" id="SSF51445">
    <property type="entry name" value="(Trans)glycosidases"/>
    <property type="match status" value="1"/>
</dbReference>
<dbReference type="SUPFAM" id="SSF52279">
    <property type="entry name" value="Beta-D-glucan exohydrolase, C-terminal domain"/>
    <property type="match status" value="1"/>
</dbReference>
<dbReference type="PROSITE" id="PS00775">
    <property type="entry name" value="GLYCOSYL_HYDROL_F3"/>
    <property type="match status" value="1"/>
</dbReference>
<reference key="1">
    <citation type="journal article" date="2005" name="Nature">
        <title>Genome sequencing and analysis of Aspergillus oryzae.</title>
        <authorList>
            <person name="Machida M."/>
            <person name="Asai K."/>
            <person name="Sano M."/>
            <person name="Tanaka T."/>
            <person name="Kumagai T."/>
            <person name="Terai G."/>
            <person name="Kusumoto K."/>
            <person name="Arima T."/>
            <person name="Akita O."/>
            <person name="Kashiwagi Y."/>
            <person name="Abe K."/>
            <person name="Gomi K."/>
            <person name="Horiuchi H."/>
            <person name="Kitamoto K."/>
            <person name="Kobayashi T."/>
            <person name="Takeuchi M."/>
            <person name="Denning D.W."/>
            <person name="Galagan J.E."/>
            <person name="Nierman W.C."/>
            <person name="Yu J."/>
            <person name="Archer D.B."/>
            <person name="Bennett J.W."/>
            <person name="Bhatnagar D."/>
            <person name="Cleveland T.E."/>
            <person name="Fedorova N.D."/>
            <person name="Gotoh O."/>
            <person name="Horikawa H."/>
            <person name="Hosoyama A."/>
            <person name="Ichinomiya M."/>
            <person name="Igarashi R."/>
            <person name="Iwashita K."/>
            <person name="Juvvadi P.R."/>
            <person name="Kato M."/>
            <person name="Kato Y."/>
            <person name="Kin T."/>
            <person name="Kokubun A."/>
            <person name="Maeda H."/>
            <person name="Maeyama N."/>
            <person name="Maruyama J."/>
            <person name="Nagasaki H."/>
            <person name="Nakajima T."/>
            <person name="Oda K."/>
            <person name="Okada K."/>
            <person name="Paulsen I."/>
            <person name="Sakamoto K."/>
            <person name="Sawano T."/>
            <person name="Takahashi M."/>
            <person name="Takase K."/>
            <person name="Terabayashi Y."/>
            <person name="Wortman J.R."/>
            <person name="Yamada O."/>
            <person name="Yamagata Y."/>
            <person name="Anazawa H."/>
            <person name="Hata Y."/>
            <person name="Koide Y."/>
            <person name="Komori T."/>
            <person name="Koyama Y."/>
            <person name="Minetoki T."/>
            <person name="Suharnan S."/>
            <person name="Tanaka A."/>
            <person name="Isono K."/>
            <person name="Kuhara S."/>
            <person name="Ogasawara N."/>
            <person name="Kikuchi H."/>
        </authorList>
    </citation>
    <scope>NUCLEOTIDE SEQUENCE [LARGE SCALE GENOMIC DNA]</scope>
    <source>
        <strain>ATCC 42149 / RIB 40</strain>
    </source>
</reference>
<sequence length="861" mass="93415">MKLGWIEVAALAAASVVSAKDDLAYSPPFYPSPWADGQGEWAEVYKRAVDIVSQMTLTEKVNLTTGTGWQLERCVGQTGSVPRLNIPSLCLQDSPLGIRFSDYNSAFPAGVNVAATWDKTLAYLRGQAMGEEFSDKGIDVQLGPAAGPLGAHPDGGRNWEGFSPDPALTGVLFAETIKGIQDAGVIATAKHYIMNEQEHFRQQPEAAGYGFNVSDSLSSNVDDKTMHELYLWPFADAVRAGVGAVMCSYNQINNSYGCENSETLNKLLKAELGFQGFVMSDWTAHHSGVGAALAGLDMSMPGDVTFDSGTSFWGANLTVGVLNGTIPQWRVDDMAVRIMAAYYKVGRDTKYTPPNFSSWTRDEYGFAHNHVSEGAYERVNEFVDVQRDHADLIRRIGAQSTVLLKNKGALPLSRKEKLVALLGEDAGSNSWGANGCDDRGCDNGTLAMAWGSGTANFPYLVTPEQAIQNEVLQGRGNVFAVTDSWALDKIAAAARQASVSLVFVNSDSGEGYLSVDGNEGDRNNITLWKNGDNVVKTAANNCNNTVVIIHSVGPVLIDEWYDHPNVTGILWAGLPGQESGNSIADVLYGRVNPGAKSPFTWGKTRESYGSPLVKDANNGNGAPQSDFTQGVFIDYRHFDKFNETPIYEFGYGLSYTTFELSDLHVQPLNASRYTPTSGMTEAAKNFGEIGDASEYVYPEGLERIHEFIYPWINSTDLKASSDDSNYGWEDSKYIPEGATDGSAQPRLPASGGAGGNPGLYEDLFRVSVKVKNTGNVAGDEVPQLYVSLGGPNEPKVVLRKFERIHLAPSQEAVWTTTLTRRDLANWDVSAQDWTVTPYPKTIYVGNSSRKLPLQASLPKAQ</sequence>
<gene>
    <name type="primary">bglA</name>
    <name type="synonym">bgl1</name>
    <name type="ORF">AO090009000356</name>
</gene>
<protein>
    <recommendedName>
        <fullName>Probable beta-glucosidase A</fullName>
        <ecNumber>3.2.1.21</ecNumber>
    </recommendedName>
    <alternativeName>
        <fullName>Beta-D-glucoside glucohydrolase A</fullName>
    </alternativeName>
    <alternativeName>
        <fullName>Cellobiase A</fullName>
    </alternativeName>
    <alternativeName>
        <fullName>Gentiobiase A</fullName>
    </alternativeName>
</protein>
<proteinExistence type="evidence at protein level"/>
<feature type="signal peptide" evidence="2">
    <location>
        <begin position="1"/>
        <end position="19"/>
    </location>
</feature>
<feature type="chain" id="PRO_0000394097" description="Probable beta-glucosidase A">
    <location>
        <begin position="20"/>
        <end position="861"/>
    </location>
</feature>
<feature type="region of interest" description="Disordered" evidence="3">
    <location>
        <begin position="730"/>
        <end position="754"/>
    </location>
</feature>
<feature type="active site" evidence="1">
    <location>
        <position position="281"/>
    </location>
</feature>
<feature type="glycosylation site" description="N-linked (GlcNAc...) asparagine" evidence="2">
    <location>
        <position position="62"/>
    </location>
</feature>
<feature type="glycosylation site" description="N-linked (GlcNAc...) asparagine" evidence="2">
    <location>
        <position position="212"/>
    </location>
</feature>
<feature type="glycosylation site" description="N-linked (GlcNAc...) asparagine" evidence="2">
    <location>
        <position position="253"/>
    </location>
</feature>
<feature type="glycosylation site" description="N-linked (GlcNAc...) asparagine" evidence="2">
    <location>
        <position position="316"/>
    </location>
</feature>
<feature type="glycosylation site" description="N-linked (GlcNAc...) asparagine" evidence="2">
    <location>
        <position position="323"/>
    </location>
</feature>
<feature type="glycosylation site" description="N-linked (GlcNAc...) asparagine" evidence="2">
    <location>
        <position position="355"/>
    </location>
</feature>
<feature type="glycosylation site" description="N-linked (GlcNAc...) asparagine" evidence="2">
    <location>
        <position position="443"/>
    </location>
</feature>
<feature type="glycosylation site" description="N-linked (GlcNAc...) asparagine" evidence="2">
    <location>
        <position position="524"/>
    </location>
</feature>
<feature type="glycosylation site" description="N-linked (GlcNAc...) asparagine" evidence="2">
    <location>
        <position position="543"/>
    </location>
</feature>
<feature type="glycosylation site" description="N-linked (GlcNAc...) asparagine" evidence="2">
    <location>
        <position position="565"/>
    </location>
</feature>
<feature type="glycosylation site" description="N-linked (GlcNAc...) asparagine" evidence="2">
    <location>
        <position position="669"/>
    </location>
</feature>
<feature type="glycosylation site" description="N-linked (GlcNAc...) asparagine" evidence="2">
    <location>
        <position position="713"/>
    </location>
</feature>
<feature type="glycosylation site" description="N-linked (GlcNAc...) asparagine" evidence="2">
    <location>
        <position position="846"/>
    </location>
</feature>
<feature type="helix" evidence="5">
    <location>
        <begin position="39"/>
        <end position="41"/>
    </location>
</feature>
<feature type="helix" evidence="5">
    <location>
        <begin position="42"/>
        <end position="52"/>
    </location>
</feature>
<feature type="helix" evidence="5">
    <location>
        <begin position="57"/>
        <end position="64"/>
    </location>
</feature>
<feature type="strand" evidence="5">
    <location>
        <begin position="71"/>
        <end position="78"/>
    </location>
</feature>
<feature type="helix" evidence="5">
    <location>
        <begin position="82"/>
        <end position="84"/>
    </location>
</feature>
<feature type="strand" evidence="5">
    <location>
        <begin position="90"/>
        <end position="92"/>
    </location>
</feature>
<feature type="helix" evidence="5">
    <location>
        <begin position="110"/>
        <end position="116"/>
    </location>
</feature>
<feature type="helix" evidence="5">
    <location>
        <begin position="119"/>
        <end position="135"/>
    </location>
</feature>
<feature type="strand" evidence="5">
    <location>
        <begin position="139"/>
        <end position="141"/>
    </location>
</feature>
<feature type="helix" evidence="5">
    <location>
        <begin position="158"/>
        <end position="160"/>
    </location>
</feature>
<feature type="helix" evidence="5">
    <location>
        <begin position="166"/>
        <end position="182"/>
    </location>
</feature>
<feature type="strand" evidence="5">
    <location>
        <begin position="186"/>
        <end position="193"/>
    </location>
</feature>
<feature type="helix" evidence="5">
    <location>
        <begin position="203"/>
        <end position="208"/>
    </location>
</feature>
<feature type="strand" evidence="5">
    <location>
        <begin position="218"/>
        <end position="220"/>
    </location>
</feature>
<feature type="helix" evidence="5">
    <location>
        <begin position="223"/>
        <end position="228"/>
    </location>
</feature>
<feature type="helix" evidence="5">
    <location>
        <begin position="232"/>
        <end position="239"/>
    </location>
</feature>
<feature type="strand" evidence="5">
    <location>
        <begin position="243"/>
        <end position="247"/>
    </location>
</feature>
<feature type="strand" evidence="5">
    <location>
        <begin position="249"/>
        <end position="256"/>
    </location>
</feature>
<feature type="helix" evidence="5">
    <location>
        <begin position="257"/>
        <end position="259"/>
    </location>
</feature>
<feature type="helix" evidence="5">
    <location>
        <begin position="261"/>
        <end position="264"/>
    </location>
</feature>
<feature type="helix" evidence="5">
    <location>
        <begin position="265"/>
        <end position="271"/>
    </location>
</feature>
<feature type="strand" evidence="5">
    <location>
        <begin position="276"/>
        <end position="280"/>
    </location>
</feature>
<feature type="helix" evidence="5">
    <location>
        <begin position="288"/>
        <end position="294"/>
    </location>
</feature>
<feature type="strand" evidence="5">
    <location>
        <begin position="298"/>
        <end position="305"/>
    </location>
</feature>
<feature type="helix" evidence="5">
    <location>
        <begin position="315"/>
        <end position="322"/>
    </location>
</feature>
<feature type="helix" evidence="5">
    <location>
        <begin position="328"/>
        <end position="344"/>
    </location>
</feature>
<feature type="helix" evidence="5">
    <location>
        <begin position="347"/>
        <end position="350"/>
    </location>
</feature>
<feature type="strand" evidence="5">
    <location>
        <begin position="362"/>
        <end position="368"/>
    </location>
</feature>
<feature type="turn" evidence="5">
    <location>
        <begin position="369"/>
        <end position="372"/>
    </location>
</feature>
<feature type="strand" evidence="5">
    <location>
        <begin position="373"/>
        <end position="378"/>
    </location>
</feature>
<feature type="helix" evidence="5">
    <location>
        <begin position="389"/>
        <end position="399"/>
    </location>
</feature>
<feature type="strand" evidence="5">
    <location>
        <begin position="402"/>
        <end position="408"/>
    </location>
</feature>
<feature type="strand" evidence="5">
    <location>
        <begin position="417"/>
        <end position="423"/>
    </location>
</feature>
<feature type="helix" evidence="5">
    <location>
        <begin position="424"/>
        <end position="426"/>
    </location>
</feature>
<feature type="helix" evidence="5">
    <location>
        <begin position="437"/>
        <end position="439"/>
    </location>
</feature>
<feature type="strand" evidence="5">
    <location>
        <begin position="450"/>
        <end position="453"/>
    </location>
</feature>
<feature type="helix" evidence="5">
    <location>
        <begin position="463"/>
        <end position="472"/>
    </location>
</feature>
<feature type="turn" evidence="5">
    <location>
        <begin position="473"/>
        <end position="475"/>
    </location>
</feature>
<feature type="strand" evidence="5">
    <location>
        <begin position="477"/>
        <end position="481"/>
    </location>
</feature>
<feature type="helix" evidence="5">
    <location>
        <begin position="487"/>
        <end position="496"/>
    </location>
</feature>
<feature type="strand" evidence="5">
    <location>
        <begin position="498"/>
        <end position="506"/>
    </location>
</feature>
<feature type="strand" evidence="5">
    <location>
        <begin position="518"/>
        <end position="521"/>
    </location>
</feature>
<feature type="helix" evidence="5">
    <location>
        <begin position="531"/>
        <end position="541"/>
    </location>
</feature>
<feature type="strand" evidence="5">
    <location>
        <begin position="543"/>
        <end position="553"/>
    </location>
</feature>
<feature type="turn" evidence="5">
    <location>
        <begin position="558"/>
        <end position="562"/>
    </location>
</feature>
<feature type="strand" evidence="5">
    <location>
        <begin position="566"/>
        <end position="571"/>
    </location>
</feature>
<feature type="helix" evidence="5">
    <location>
        <begin position="579"/>
        <end position="587"/>
    </location>
</feature>
<feature type="strand" evidence="5">
    <location>
        <begin position="603"/>
        <end position="605"/>
    </location>
</feature>
<feature type="helix" evidence="5">
    <location>
        <begin position="606"/>
        <end position="608"/>
    </location>
</feature>
<feature type="turn" evidence="5">
    <location>
        <begin position="617"/>
        <end position="620"/>
    </location>
</feature>
<feature type="strand" evidence="5">
    <location>
        <begin position="624"/>
        <end position="626"/>
    </location>
</feature>
<feature type="turn" evidence="5">
    <location>
        <begin position="628"/>
        <end position="631"/>
    </location>
</feature>
<feature type="helix" evidence="5">
    <location>
        <begin position="635"/>
        <end position="640"/>
    </location>
</feature>
<feature type="strand" evidence="5">
    <location>
        <begin position="658"/>
        <end position="667"/>
    </location>
</feature>
<feature type="helix" evidence="5">
    <location>
        <begin position="692"/>
        <end position="695"/>
    </location>
</feature>
<feature type="strand" evidence="5">
    <location>
        <begin position="712"/>
        <end position="715"/>
    </location>
</feature>
<feature type="helix" evidence="5">
    <location>
        <begin position="717"/>
        <end position="721"/>
    </location>
</feature>
<feature type="turn" evidence="5">
    <location>
        <begin position="724"/>
        <end position="727"/>
    </location>
</feature>
<feature type="helix" evidence="5">
    <location>
        <begin position="730"/>
        <end position="732"/>
    </location>
</feature>
<feature type="turn" evidence="5">
    <location>
        <begin position="736"/>
        <end position="739"/>
    </location>
</feature>
<feature type="helix" evidence="5">
    <location>
        <begin position="757"/>
        <end position="760"/>
    </location>
</feature>
<feature type="strand" evidence="5">
    <location>
        <begin position="762"/>
        <end position="772"/>
    </location>
</feature>
<feature type="strand" evidence="5">
    <location>
        <begin position="774"/>
        <end position="776"/>
    </location>
</feature>
<feature type="strand" evidence="5">
    <location>
        <begin position="778"/>
        <end position="780"/>
    </location>
</feature>
<feature type="strand" evidence="5">
    <location>
        <begin position="783"/>
        <end position="787"/>
    </location>
</feature>
<feature type="strand" evidence="5">
    <location>
        <begin position="797"/>
        <end position="801"/>
    </location>
</feature>
<feature type="strand" evidence="5">
    <location>
        <begin position="804"/>
        <end position="806"/>
    </location>
</feature>
<feature type="strand" evidence="5">
    <location>
        <begin position="811"/>
        <end position="819"/>
    </location>
</feature>
<feature type="helix" evidence="5">
    <location>
        <begin position="820"/>
        <end position="823"/>
    </location>
</feature>
<feature type="strand" evidence="5">
    <location>
        <begin position="825"/>
        <end position="827"/>
    </location>
</feature>
<feature type="turn" evidence="5">
    <location>
        <begin position="828"/>
        <end position="831"/>
    </location>
</feature>
<feature type="strand" evidence="5">
    <location>
        <begin position="832"/>
        <end position="834"/>
    </location>
</feature>
<feature type="strand" evidence="5">
    <location>
        <begin position="841"/>
        <end position="849"/>
    </location>
</feature>
<feature type="strand" evidence="5">
    <location>
        <begin position="853"/>
        <end position="856"/>
    </location>
</feature>
<name>BGLA_ASPOR</name>
<evidence type="ECO:0000250" key="1"/>
<evidence type="ECO:0000255" key="2"/>
<evidence type="ECO:0000256" key="3">
    <source>
        <dbReference type="SAM" id="MobiDB-lite"/>
    </source>
</evidence>
<evidence type="ECO:0000305" key="4"/>
<evidence type="ECO:0007829" key="5">
    <source>
        <dbReference type="PDB" id="5FJJ"/>
    </source>
</evidence>
<keyword id="KW-0002">3D-structure</keyword>
<keyword id="KW-0119">Carbohydrate metabolism</keyword>
<keyword id="KW-0136">Cellulose degradation</keyword>
<keyword id="KW-0325">Glycoprotein</keyword>
<keyword id="KW-0326">Glycosidase</keyword>
<keyword id="KW-0378">Hydrolase</keyword>
<keyword id="KW-0624">Polysaccharide degradation</keyword>
<keyword id="KW-1185">Reference proteome</keyword>
<keyword id="KW-0964">Secreted</keyword>
<keyword id="KW-0732">Signal</keyword>